<organism>
    <name type="scientific">Methanosphaera stadtmanae (strain ATCC 43021 / DSM 3091 / JCM 11832 / MCB-3)</name>
    <dbReference type="NCBI Taxonomy" id="339860"/>
    <lineage>
        <taxon>Archaea</taxon>
        <taxon>Methanobacteriati</taxon>
        <taxon>Methanobacteriota</taxon>
        <taxon>Methanomada group</taxon>
        <taxon>Methanobacteria</taxon>
        <taxon>Methanobacteriales</taxon>
        <taxon>Methanobacteriaceae</taxon>
        <taxon>Methanosphaera</taxon>
    </lineage>
</organism>
<sequence length="271" mass="30932">MSNTKEILEKYNIKLDTNKSQNYLIDDNKLNIILENADIQDNETILEIGAGIGTLTLPMAKKAKKVIAIEKDPIIVDILKQQIIKEKLTNIEIIKDDALKVDFPKFDKVVSNLPYQISSPVTFKLLEYPFKKAILMYQLEFAKRMQAKPDTHEYSRLSVALSYRADTKIIDTLPPEAFIPKPKIKSAVIELIPKNNKPIDKLLDNTIRALFQHRNKKAKKALIQSAHELGVDKKVLKQKLSNVTNDLFEEKVFKLTPTQIKEISLILEGNL</sequence>
<protein>
    <recommendedName>
        <fullName evidence="1">Probable ribosomal RNA small subunit methyltransferase A</fullName>
        <ecNumber evidence="1">2.1.1.-</ecNumber>
    </recommendedName>
    <alternativeName>
        <fullName evidence="1">16S rRNA dimethyladenosine transferase</fullName>
    </alternativeName>
    <alternativeName>
        <fullName evidence="1">16S rRNA dimethylase</fullName>
    </alternativeName>
    <alternativeName>
        <fullName evidence="1">S-adenosylmethionine-6-N',N'-adenosyl(rRNA) dimethyltransferase</fullName>
    </alternativeName>
</protein>
<keyword id="KW-0963">Cytoplasm</keyword>
<keyword id="KW-0489">Methyltransferase</keyword>
<keyword id="KW-1185">Reference proteome</keyword>
<keyword id="KW-0694">RNA-binding</keyword>
<keyword id="KW-0698">rRNA processing</keyword>
<keyword id="KW-0949">S-adenosyl-L-methionine</keyword>
<keyword id="KW-0808">Transferase</keyword>
<reference key="1">
    <citation type="journal article" date="2006" name="J. Bacteriol.">
        <title>The genome sequence of Methanosphaera stadtmanae reveals why this human intestinal archaeon is restricted to methanol and H2 for methane formation and ATP synthesis.</title>
        <authorList>
            <person name="Fricke W.F."/>
            <person name="Seedorf H."/>
            <person name="Henne A."/>
            <person name="Kruer M."/>
            <person name="Liesegang H."/>
            <person name="Hedderich R."/>
            <person name="Gottschalk G."/>
            <person name="Thauer R.K."/>
        </authorList>
    </citation>
    <scope>NUCLEOTIDE SEQUENCE [LARGE SCALE GENOMIC DNA]</scope>
    <source>
        <strain>ATCC 43021 / DSM 3091 / JCM 11832 / MCB-3</strain>
    </source>
</reference>
<proteinExistence type="inferred from homology"/>
<name>RSMA_METST</name>
<accession>Q2NE42</accession>
<evidence type="ECO:0000255" key="1">
    <source>
        <dbReference type="HAMAP-Rule" id="MF_00607"/>
    </source>
</evidence>
<comment type="function">
    <text evidence="1">Specifically dimethylates two adjacent adenosines in the loop of a conserved hairpin near the 3'-end of 16S rRNA in the 30S particle. May play a critical role in biogenesis of 30S subunits.</text>
</comment>
<comment type="subcellular location">
    <subcellularLocation>
        <location evidence="1">Cytoplasm</location>
    </subcellularLocation>
</comment>
<comment type="similarity">
    <text evidence="1">Belongs to the class I-like SAM-binding methyltransferase superfamily. rRNA adenine N(6)-methyltransferase family. RsmA subfamily.</text>
</comment>
<gene>
    <name evidence="1" type="primary">rsmA</name>
    <name evidence="1" type="synonym">ksgA</name>
    <name type="ordered locus">Msp_1544</name>
</gene>
<feature type="chain" id="PRO_0000257381" description="Probable ribosomal RNA small subunit methyltransferase A">
    <location>
        <begin position="1"/>
        <end position="271"/>
    </location>
</feature>
<feature type="binding site" evidence="1">
    <location>
        <position position="22"/>
    </location>
    <ligand>
        <name>S-adenosyl-L-methionine</name>
        <dbReference type="ChEBI" id="CHEBI:59789"/>
    </ligand>
</feature>
<feature type="binding site" evidence="1">
    <location>
        <position position="24"/>
    </location>
    <ligand>
        <name>S-adenosyl-L-methionine</name>
        <dbReference type="ChEBI" id="CHEBI:59789"/>
    </ligand>
</feature>
<feature type="binding site" evidence="1">
    <location>
        <position position="49"/>
    </location>
    <ligand>
        <name>S-adenosyl-L-methionine</name>
        <dbReference type="ChEBI" id="CHEBI:59789"/>
    </ligand>
</feature>
<feature type="binding site" evidence="1">
    <location>
        <position position="70"/>
    </location>
    <ligand>
        <name>S-adenosyl-L-methionine</name>
        <dbReference type="ChEBI" id="CHEBI:59789"/>
    </ligand>
</feature>
<feature type="binding site" evidence="1">
    <location>
        <position position="97"/>
    </location>
    <ligand>
        <name>S-adenosyl-L-methionine</name>
        <dbReference type="ChEBI" id="CHEBI:59789"/>
    </ligand>
</feature>
<feature type="binding site" evidence="1">
    <location>
        <position position="112"/>
    </location>
    <ligand>
        <name>S-adenosyl-L-methionine</name>
        <dbReference type="ChEBI" id="CHEBI:59789"/>
    </ligand>
</feature>
<dbReference type="EC" id="2.1.1.-" evidence="1"/>
<dbReference type="EMBL" id="CP000102">
    <property type="protein sequence ID" value="ABC57911.1"/>
    <property type="molecule type" value="Genomic_DNA"/>
</dbReference>
<dbReference type="RefSeq" id="WP_011407110.1">
    <property type="nucleotide sequence ID" value="NC_007681.1"/>
</dbReference>
<dbReference type="SMR" id="Q2NE42"/>
<dbReference type="STRING" id="339860.Msp_1544"/>
<dbReference type="GeneID" id="41326120"/>
<dbReference type="KEGG" id="mst:Msp_1544"/>
<dbReference type="eggNOG" id="arCOG04131">
    <property type="taxonomic scope" value="Archaea"/>
</dbReference>
<dbReference type="HOGENOM" id="CLU_041220_0_2_2"/>
<dbReference type="OrthoDB" id="9883at2157"/>
<dbReference type="Proteomes" id="UP000001931">
    <property type="component" value="Chromosome"/>
</dbReference>
<dbReference type="GO" id="GO:0005737">
    <property type="term" value="C:cytoplasm"/>
    <property type="evidence" value="ECO:0007669"/>
    <property type="project" value="UniProtKB-SubCell"/>
</dbReference>
<dbReference type="GO" id="GO:0003723">
    <property type="term" value="F:RNA binding"/>
    <property type="evidence" value="ECO:0007669"/>
    <property type="project" value="UniProtKB-KW"/>
</dbReference>
<dbReference type="GO" id="GO:0000179">
    <property type="term" value="F:rRNA (adenine-N6,N6-)-dimethyltransferase activity"/>
    <property type="evidence" value="ECO:0007669"/>
    <property type="project" value="InterPro"/>
</dbReference>
<dbReference type="CDD" id="cd02440">
    <property type="entry name" value="AdoMet_MTases"/>
    <property type="match status" value="1"/>
</dbReference>
<dbReference type="FunFam" id="3.40.50.150:FF:000023">
    <property type="entry name" value="Ribosomal RNA small subunit methyltransferase A"/>
    <property type="match status" value="1"/>
</dbReference>
<dbReference type="Gene3D" id="1.10.8.100">
    <property type="entry name" value="Ribosomal RNA adenine dimethylase-like, domain 2"/>
    <property type="match status" value="1"/>
</dbReference>
<dbReference type="Gene3D" id="3.40.50.150">
    <property type="entry name" value="Vaccinia Virus protein VP39"/>
    <property type="match status" value="1"/>
</dbReference>
<dbReference type="HAMAP" id="MF_00607">
    <property type="entry name" value="16SrRNA_methyltr_A"/>
    <property type="match status" value="1"/>
</dbReference>
<dbReference type="InterPro" id="IPR001737">
    <property type="entry name" value="KsgA/Erm"/>
</dbReference>
<dbReference type="InterPro" id="IPR023165">
    <property type="entry name" value="rRNA_Ade_diMease-like_C"/>
</dbReference>
<dbReference type="InterPro" id="IPR020596">
    <property type="entry name" value="rRNA_Ade_Mease_Trfase_CS"/>
</dbReference>
<dbReference type="InterPro" id="IPR020598">
    <property type="entry name" value="rRNA_Ade_methylase_Trfase_N"/>
</dbReference>
<dbReference type="InterPro" id="IPR011530">
    <property type="entry name" value="rRNA_adenine_dimethylase"/>
</dbReference>
<dbReference type="InterPro" id="IPR029063">
    <property type="entry name" value="SAM-dependent_MTases_sf"/>
</dbReference>
<dbReference type="NCBIfam" id="TIGR00755">
    <property type="entry name" value="ksgA"/>
    <property type="match status" value="1"/>
</dbReference>
<dbReference type="PANTHER" id="PTHR11727">
    <property type="entry name" value="DIMETHYLADENOSINE TRANSFERASE"/>
    <property type="match status" value="1"/>
</dbReference>
<dbReference type="PANTHER" id="PTHR11727:SF7">
    <property type="entry name" value="DIMETHYLADENOSINE TRANSFERASE-RELATED"/>
    <property type="match status" value="1"/>
</dbReference>
<dbReference type="Pfam" id="PF00398">
    <property type="entry name" value="RrnaAD"/>
    <property type="match status" value="1"/>
</dbReference>
<dbReference type="SMART" id="SM00650">
    <property type="entry name" value="rADc"/>
    <property type="match status" value="1"/>
</dbReference>
<dbReference type="SUPFAM" id="SSF53335">
    <property type="entry name" value="S-adenosyl-L-methionine-dependent methyltransferases"/>
    <property type="match status" value="1"/>
</dbReference>
<dbReference type="PROSITE" id="PS01131">
    <property type="entry name" value="RRNA_A_DIMETH"/>
    <property type="match status" value="1"/>
</dbReference>
<dbReference type="PROSITE" id="PS51689">
    <property type="entry name" value="SAM_RNA_A_N6_MT"/>
    <property type="match status" value="1"/>
</dbReference>